<keyword id="KW-0030">Aminoacyl-tRNA synthetase</keyword>
<keyword id="KW-0067">ATP-binding</keyword>
<keyword id="KW-0963">Cytoplasm</keyword>
<keyword id="KW-0436">Ligase</keyword>
<keyword id="KW-0460">Magnesium</keyword>
<keyword id="KW-0479">Metal-binding</keyword>
<keyword id="KW-0547">Nucleotide-binding</keyword>
<keyword id="KW-0648">Protein biosynthesis</keyword>
<keyword id="KW-1185">Reference proteome</keyword>
<comment type="catalytic activity">
    <reaction evidence="1">
        <text>tRNA(Lys) + L-lysine + ATP = L-lysyl-tRNA(Lys) + AMP + diphosphate</text>
        <dbReference type="Rhea" id="RHEA:20792"/>
        <dbReference type="Rhea" id="RHEA-COMP:9696"/>
        <dbReference type="Rhea" id="RHEA-COMP:9697"/>
        <dbReference type="ChEBI" id="CHEBI:30616"/>
        <dbReference type="ChEBI" id="CHEBI:32551"/>
        <dbReference type="ChEBI" id="CHEBI:33019"/>
        <dbReference type="ChEBI" id="CHEBI:78442"/>
        <dbReference type="ChEBI" id="CHEBI:78529"/>
        <dbReference type="ChEBI" id="CHEBI:456215"/>
        <dbReference type="EC" id="6.1.1.6"/>
    </reaction>
</comment>
<comment type="cofactor">
    <cofactor evidence="1">
        <name>Mg(2+)</name>
        <dbReference type="ChEBI" id="CHEBI:18420"/>
    </cofactor>
    <text evidence="1">Binds 3 Mg(2+) ions per subunit.</text>
</comment>
<comment type="subunit">
    <text evidence="1">Homodimer.</text>
</comment>
<comment type="subcellular location">
    <subcellularLocation>
        <location evidence="1">Cytoplasm</location>
    </subcellularLocation>
</comment>
<comment type="similarity">
    <text evidence="1">Belongs to the class-II aminoacyl-tRNA synthetase family.</text>
</comment>
<proteinExistence type="inferred from homology"/>
<name>SYK_FERNB</name>
<protein>
    <recommendedName>
        <fullName evidence="1">Lysine--tRNA ligase</fullName>
        <ecNumber evidence="1">6.1.1.6</ecNumber>
    </recommendedName>
    <alternativeName>
        <fullName evidence="1">Lysyl-tRNA synthetase</fullName>
        <shortName evidence="1">LysRS</shortName>
    </alternativeName>
</protein>
<gene>
    <name evidence="1" type="primary">lysS</name>
    <name type="ordered locus">Fnod_1154</name>
</gene>
<reference key="1">
    <citation type="submission" date="2007-07" db="EMBL/GenBank/DDBJ databases">
        <title>Complete sequence of Fervidobacterium nodosum Rt17-B1.</title>
        <authorList>
            <consortium name="US DOE Joint Genome Institute"/>
            <person name="Copeland A."/>
            <person name="Lucas S."/>
            <person name="Lapidus A."/>
            <person name="Barry K."/>
            <person name="Glavina del Rio T."/>
            <person name="Dalin E."/>
            <person name="Tice H."/>
            <person name="Pitluck S."/>
            <person name="Saunders E."/>
            <person name="Brettin T."/>
            <person name="Bruce D."/>
            <person name="Detter J.C."/>
            <person name="Han C."/>
            <person name="Schmutz J."/>
            <person name="Larimer F."/>
            <person name="Land M."/>
            <person name="Hauser L."/>
            <person name="Kyrpides N."/>
            <person name="Mikhailova N."/>
            <person name="Nelson K."/>
            <person name="Gogarten J.P."/>
            <person name="Noll K."/>
            <person name="Richardson P."/>
        </authorList>
    </citation>
    <scope>NUCLEOTIDE SEQUENCE [LARGE SCALE GENOMIC DNA]</scope>
    <source>
        <strain>ATCC 35602 / DSM 5306 / Rt17-B1</strain>
    </source>
</reference>
<organism>
    <name type="scientific">Fervidobacterium nodosum (strain ATCC 35602 / DSM 5306 / Rt17-B1)</name>
    <dbReference type="NCBI Taxonomy" id="381764"/>
    <lineage>
        <taxon>Bacteria</taxon>
        <taxon>Thermotogati</taxon>
        <taxon>Thermotogota</taxon>
        <taxon>Thermotogae</taxon>
        <taxon>Thermotogales</taxon>
        <taxon>Fervidobacteriaceae</taxon>
        <taxon>Fervidobacterium</taxon>
    </lineage>
</organism>
<feature type="chain" id="PRO_1000071870" description="Lysine--tRNA ligase">
    <location>
        <begin position="1"/>
        <end position="509"/>
    </location>
</feature>
<feature type="binding site" evidence="1">
    <location>
        <position position="395"/>
    </location>
    <ligand>
        <name>Mg(2+)</name>
        <dbReference type="ChEBI" id="CHEBI:18420"/>
        <label>1</label>
    </ligand>
</feature>
<feature type="binding site" evidence="1">
    <location>
        <position position="402"/>
    </location>
    <ligand>
        <name>Mg(2+)</name>
        <dbReference type="ChEBI" id="CHEBI:18420"/>
        <label>1</label>
    </ligand>
</feature>
<feature type="binding site" evidence="1">
    <location>
        <position position="402"/>
    </location>
    <ligand>
        <name>Mg(2+)</name>
        <dbReference type="ChEBI" id="CHEBI:18420"/>
        <label>2</label>
    </ligand>
</feature>
<dbReference type="EC" id="6.1.1.6" evidence="1"/>
<dbReference type="EMBL" id="CP000771">
    <property type="protein sequence ID" value="ABS61001.1"/>
    <property type="molecule type" value="Genomic_DNA"/>
</dbReference>
<dbReference type="RefSeq" id="WP_011994314.1">
    <property type="nucleotide sequence ID" value="NC_009718.1"/>
</dbReference>
<dbReference type="SMR" id="A7HM68"/>
<dbReference type="STRING" id="381764.Fnod_1154"/>
<dbReference type="KEGG" id="fno:Fnod_1154"/>
<dbReference type="eggNOG" id="COG1190">
    <property type="taxonomic scope" value="Bacteria"/>
</dbReference>
<dbReference type="HOGENOM" id="CLU_008255_6_0_0"/>
<dbReference type="OrthoDB" id="9802326at2"/>
<dbReference type="Proteomes" id="UP000002415">
    <property type="component" value="Chromosome"/>
</dbReference>
<dbReference type="GO" id="GO:0005829">
    <property type="term" value="C:cytosol"/>
    <property type="evidence" value="ECO:0007669"/>
    <property type="project" value="TreeGrafter"/>
</dbReference>
<dbReference type="GO" id="GO:0005524">
    <property type="term" value="F:ATP binding"/>
    <property type="evidence" value="ECO:0007669"/>
    <property type="project" value="UniProtKB-UniRule"/>
</dbReference>
<dbReference type="GO" id="GO:0004824">
    <property type="term" value="F:lysine-tRNA ligase activity"/>
    <property type="evidence" value="ECO:0007669"/>
    <property type="project" value="UniProtKB-UniRule"/>
</dbReference>
<dbReference type="GO" id="GO:0000287">
    <property type="term" value="F:magnesium ion binding"/>
    <property type="evidence" value="ECO:0007669"/>
    <property type="project" value="UniProtKB-UniRule"/>
</dbReference>
<dbReference type="GO" id="GO:0000049">
    <property type="term" value="F:tRNA binding"/>
    <property type="evidence" value="ECO:0007669"/>
    <property type="project" value="TreeGrafter"/>
</dbReference>
<dbReference type="GO" id="GO:0006430">
    <property type="term" value="P:lysyl-tRNA aminoacylation"/>
    <property type="evidence" value="ECO:0007669"/>
    <property type="project" value="UniProtKB-UniRule"/>
</dbReference>
<dbReference type="CDD" id="cd00775">
    <property type="entry name" value="LysRS_core"/>
    <property type="match status" value="1"/>
</dbReference>
<dbReference type="CDD" id="cd04322">
    <property type="entry name" value="LysRS_N"/>
    <property type="match status" value="1"/>
</dbReference>
<dbReference type="FunFam" id="2.40.50.140:FF:000024">
    <property type="entry name" value="Lysine--tRNA ligase"/>
    <property type="match status" value="1"/>
</dbReference>
<dbReference type="FunFam" id="3.30.930.10:FF:000238">
    <property type="entry name" value="Lysine--tRNA ligase"/>
    <property type="match status" value="1"/>
</dbReference>
<dbReference type="Gene3D" id="3.30.930.10">
    <property type="entry name" value="Bira Bifunctional Protein, Domain 2"/>
    <property type="match status" value="1"/>
</dbReference>
<dbReference type="Gene3D" id="2.40.50.140">
    <property type="entry name" value="Nucleic acid-binding proteins"/>
    <property type="match status" value="1"/>
</dbReference>
<dbReference type="HAMAP" id="MF_00252">
    <property type="entry name" value="Lys_tRNA_synth_class2"/>
    <property type="match status" value="1"/>
</dbReference>
<dbReference type="InterPro" id="IPR004364">
    <property type="entry name" value="Aa-tRNA-synt_II"/>
</dbReference>
<dbReference type="InterPro" id="IPR006195">
    <property type="entry name" value="aa-tRNA-synth_II"/>
</dbReference>
<dbReference type="InterPro" id="IPR045864">
    <property type="entry name" value="aa-tRNA-synth_II/BPL/LPL"/>
</dbReference>
<dbReference type="InterPro" id="IPR002313">
    <property type="entry name" value="Lys-tRNA-ligase_II"/>
</dbReference>
<dbReference type="InterPro" id="IPR034762">
    <property type="entry name" value="Lys-tRNA-ligase_II_bac/euk"/>
</dbReference>
<dbReference type="InterPro" id="IPR044136">
    <property type="entry name" value="Lys-tRNA-ligase_II_N"/>
</dbReference>
<dbReference type="InterPro" id="IPR018149">
    <property type="entry name" value="Lys-tRNA-synth_II_C"/>
</dbReference>
<dbReference type="InterPro" id="IPR012340">
    <property type="entry name" value="NA-bd_OB-fold"/>
</dbReference>
<dbReference type="InterPro" id="IPR004365">
    <property type="entry name" value="NA-bd_OB_tRNA"/>
</dbReference>
<dbReference type="NCBIfam" id="TIGR00499">
    <property type="entry name" value="lysS_bact"/>
    <property type="match status" value="1"/>
</dbReference>
<dbReference type="NCBIfam" id="NF001756">
    <property type="entry name" value="PRK00484.1"/>
    <property type="match status" value="1"/>
</dbReference>
<dbReference type="PANTHER" id="PTHR42918:SF15">
    <property type="entry name" value="LYSINE--TRNA LIGASE, CHLOROPLASTIC_MITOCHONDRIAL"/>
    <property type="match status" value="1"/>
</dbReference>
<dbReference type="PANTHER" id="PTHR42918">
    <property type="entry name" value="LYSYL-TRNA SYNTHETASE"/>
    <property type="match status" value="1"/>
</dbReference>
<dbReference type="Pfam" id="PF00152">
    <property type="entry name" value="tRNA-synt_2"/>
    <property type="match status" value="1"/>
</dbReference>
<dbReference type="Pfam" id="PF01336">
    <property type="entry name" value="tRNA_anti-codon"/>
    <property type="match status" value="1"/>
</dbReference>
<dbReference type="PIRSF" id="PIRSF039101">
    <property type="entry name" value="LysRS2"/>
    <property type="match status" value="1"/>
</dbReference>
<dbReference type="PRINTS" id="PR00982">
    <property type="entry name" value="TRNASYNTHLYS"/>
</dbReference>
<dbReference type="SUPFAM" id="SSF55681">
    <property type="entry name" value="Class II aaRS and biotin synthetases"/>
    <property type="match status" value="1"/>
</dbReference>
<dbReference type="SUPFAM" id="SSF50249">
    <property type="entry name" value="Nucleic acid-binding proteins"/>
    <property type="match status" value="1"/>
</dbReference>
<dbReference type="PROSITE" id="PS50862">
    <property type="entry name" value="AA_TRNA_LIGASE_II"/>
    <property type="match status" value="1"/>
</dbReference>
<evidence type="ECO:0000255" key="1">
    <source>
        <dbReference type="HAMAP-Rule" id="MF_00252"/>
    </source>
</evidence>
<sequence>MLKDFREARIKEIDELRNLGINPYPYSYNKTHTTEDIKKQFEHLSNGEVTDKRVSTAGRIMSIREHGKSAFFHIKDTYGRIQAYIRKDKTENYEFFKERVTVGDIVGVEGIVFKSNTGEITILVEKFELLVKPLRPMPEKWHGIKDKEVLYRQRYVDMIANDETIKRFRMRSDIIRMIREFLTKKGFFEVETPILQYLTGGASARPFITHLNALDIDMYLRIATELHLKRFIVGGFDKVYEIGKIFRNEGISYKHHPEFTSIELYQAYADYEDMMNLTEELITYLVEQLYGTTKITYQGQEIDFTRPWRRVKMRDFIKENLGVDIIEDSDETMAKVLAENGVEVDINDRGHMIEKLWDLVEDKVIQPTFLLEHPVEISPLAKKHREDPRVTERFELIIYGREMANAFSELNDPVDQLERFMNQLRLRDLGDQEAQMLDKDFVRALEYGMPPTGGLGIGIDRLVMLLTDSANIRDVIAFPLVRPEGDIDIEDYTDLEKSEIIEKEGGNKA</sequence>
<accession>A7HM68</accession>